<dbReference type="EMBL" id="AE001273">
    <property type="protein sequence ID" value="AAC67706.1"/>
    <property type="molecule type" value="Genomic_DNA"/>
</dbReference>
<dbReference type="PIR" id="F71555">
    <property type="entry name" value="F71555"/>
</dbReference>
<dbReference type="RefSeq" id="NP_219618.1">
    <property type="nucleotide sequence ID" value="NC_000117.1"/>
</dbReference>
<dbReference type="RefSeq" id="WP_009871462.1">
    <property type="nucleotide sequence ID" value="NC_000117.1"/>
</dbReference>
<dbReference type="IntAct" id="P0DJI3">
    <property type="interactions" value="4"/>
</dbReference>
<dbReference type="MINT" id="P0DJI3"/>
<dbReference type="STRING" id="272561.CT_115"/>
<dbReference type="EnsemblBacteria" id="AAC67706">
    <property type="protein sequence ID" value="AAC67706"/>
    <property type="gene ID" value="CT_115"/>
</dbReference>
<dbReference type="GeneID" id="884060"/>
<dbReference type="KEGG" id="ctr:CT_115"/>
<dbReference type="PATRIC" id="fig|272561.5.peg.126"/>
<dbReference type="HOGENOM" id="CLU_139635_0_0_0"/>
<dbReference type="InParanoid" id="P0DJI3"/>
<dbReference type="OrthoDB" id="19232at2"/>
<dbReference type="Proteomes" id="UP000000431">
    <property type="component" value="Chromosome"/>
</dbReference>
<dbReference type="GO" id="GO:0005576">
    <property type="term" value="C:extracellular region"/>
    <property type="evidence" value="ECO:0007669"/>
    <property type="project" value="UniProtKB-SubCell"/>
</dbReference>
<dbReference type="GO" id="GO:0033644">
    <property type="term" value="C:host cell membrane"/>
    <property type="evidence" value="ECO:0007669"/>
    <property type="project" value="UniProtKB-KW"/>
</dbReference>
<dbReference type="GO" id="GO:0140221">
    <property type="term" value="C:pathogen-containing vacuole membrane"/>
    <property type="evidence" value="ECO:0007669"/>
    <property type="project" value="UniProtKB-SubCell"/>
</dbReference>
<dbReference type="InterPro" id="IPR035117">
    <property type="entry name" value="IncD"/>
</dbReference>
<dbReference type="Pfam" id="PF17628">
    <property type="entry name" value="IncD"/>
    <property type="match status" value="1"/>
</dbReference>
<organism>
    <name type="scientific">Chlamydia trachomatis serovar D (strain ATCC VR-885 / DSM 19411 / UW-3/Cx)</name>
    <dbReference type="NCBI Taxonomy" id="272561"/>
    <lineage>
        <taxon>Bacteria</taxon>
        <taxon>Pseudomonadati</taxon>
        <taxon>Chlamydiota</taxon>
        <taxon>Chlamydiia</taxon>
        <taxon>Chlamydiales</taxon>
        <taxon>Chlamydiaceae</taxon>
        <taxon>Chlamydia/Chlamydophila group</taxon>
        <taxon>Chlamydia</taxon>
    </lineage>
</organism>
<gene>
    <name type="primary">incD</name>
    <name type="ordered locus">CT_115</name>
</gene>
<name>INCD_CHLTR</name>
<keyword id="KW-1043">Host membrane</keyword>
<keyword id="KW-0472">Membrane</keyword>
<keyword id="KW-1185">Reference proteome</keyword>
<keyword id="KW-0964">Secreted</keyword>
<keyword id="KW-0812">Transmembrane</keyword>
<keyword id="KW-1133">Transmembrane helix</keyword>
<keyword id="KW-0843">Virulence</keyword>
<accession>P0DJI3</accession>
<accession>O84117</accession>
<accession>Q9RPQ1</accession>
<feature type="chain" id="PRO_0000084198" description="Inclusion membrane protein D">
    <location>
        <begin position="1"/>
        <end position="141"/>
    </location>
</feature>
<feature type="transmembrane region" description="Helical" evidence="2">
    <location>
        <begin position="38"/>
        <end position="58"/>
    </location>
</feature>
<feature type="transmembrane region" description="Helical" evidence="2">
    <location>
        <begin position="68"/>
        <end position="88"/>
    </location>
</feature>
<reference key="1">
    <citation type="journal article" date="1998" name="Science">
        <title>Genome sequence of an obligate intracellular pathogen of humans: Chlamydia trachomatis.</title>
        <authorList>
            <person name="Stephens R.S."/>
            <person name="Kalman S."/>
            <person name="Lammel C.J."/>
            <person name="Fan J."/>
            <person name="Marathe R."/>
            <person name="Aravind L."/>
            <person name="Mitchell W.P."/>
            <person name="Olinger L."/>
            <person name="Tatusov R.L."/>
            <person name="Zhao Q."/>
            <person name="Koonin E.V."/>
            <person name="Davis R.W."/>
        </authorList>
    </citation>
    <scope>NUCLEOTIDE SEQUENCE [LARGE SCALE GENOMIC DNA]</scope>
    <source>
        <strain>ATCC VR-885 / DSM 19411 / UW-3/Cx</strain>
    </source>
</reference>
<protein>
    <recommendedName>
        <fullName>Inclusion membrane protein D</fullName>
    </recommendedName>
</protein>
<comment type="function">
    <text evidence="1">Inclusion membrane protein probably involved in early modification events of the chlamydial inclusion.</text>
</comment>
<comment type="subcellular location">
    <subcellularLocation>
        <location evidence="1">Secreted</location>
    </subcellularLocation>
    <subcellularLocation>
        <location evidence="1">Host vacuole</location>
        <location evidence="1">Host pathogen-containing vacuole</location>
        <location evidence="1">Host pathogen-containing vacuole membrane</location>
        <topology evidence="2">Multi-pass membrane protein</topology>
    </subcellularLocation>
    <text evidence="1">Secreted, probably by a type III secretion system (By similarity). Localized in the inclusion membrane (By similarity).</text>
</comment>
<evidence type="ECO:0000250" key="1">
    <source>
        <dbReference type="UniProtKB" id="B0B9M3"/>
    </source>
</evidence>
<evidence type="ECO:0000255" key="2"/>
<sequence>MTKVYANSIQQERVVDRIALLERCLDPSNSLPTAKRLVAVAVATILAVALLVVAGLLFSGVLCSPVSVLAASLFFGVGAFLLGGALVGGVLTTEAVTRERLHRSQTLMWNNLCCKTAEVEQKISTASANAKSNDKTRKLGE</sequence>
<proteinExistence type="inferred from homology"/>